<name>DEOD_ECO8A</name>
<reference key="1">
    <citation type="journal article" date="2009" name="PLoS Genet.">
        <title>Organised genome dynamics in the Escherichia coli species results in highly diverse adaptive paths.</title>
        <authorList>
            <person name="Touchon M."/>
            <person name="Hoede C."/>
            <person name="Tenaillon O."/>
            <person name="Barbe V."/>
            <person name="Baeriswyl S."/>
            <person name="Bidet P."/>
            <person name="Bingen E."/>
            <person name="Bonacorsi S."/>
            <person name="Bouchier C."/>
            <person name="Bouvet O."/>
            <person name="Calteau A."/>
            <person name="Chiapello H."/>
            <person name="Clermont O."/>
            <person name="Cruveiller S."/>
            <person name="Danchin A."/>
            <person name="Diard M."/>
            <person name="Dossat C."/>
            <person name="Karoui M.E."/>
            <person name="Frapy E."/>
            <person name="Garry L."/>
            <person name="Ghigo J.M."/>
            <person name="Gilles A.M."/>
            <person name="Johnson J."/>
            <person name="Le Bouguenec C."/>
            <person name="Lescat M."/>
            <person name="Mangenot S."/>
            <person name="Martinez-Jehanne V."/>
            <person name="Matic I."/>
            <person name="Nassif X."/>
            <person name="Oztas S."/>
            <person name="Petit M.A."/>
            <person name="Pichon C."/>
            <person name="Rouy Z."/>
            <person name="Ruf C.S."/>
            <person name="Schneider D."/>
            <person name="Tourret J."/>
            <person name="Vacherie B."/>
            <person name="Vallenet D."/>
            <person name="Medigue C."/>
            <person name="Rocha E.P.C."/>
            <person name="Denamur E."/>
        </authorList>
    </citation>
    <scope>NUCLEOTIDE SEQUENCE [LARGE SCALE GENOMIC DNA]</scope>
    <source>
        <strain>IAI1</strain>
    </source>
</reference>
<evidence type="ECO:0000250" key="1">
    <source>
        <dbReference type="UniProtKB" id="P50389"/>
    </source>
</evidence>
<evidence type="ECO:0000255" key="2">
    <source>
        <dbReference type="HAMAP-Rule" id="MF_01627"/>
    </source>
</evidence>
<gene>
    <name evidence="2" type="primary">deoD</name>
    <name type="ordered locus">ECIAI1_4607</name>
</gene>
<proteinExistence type="inferred from homology"/>
<accession>B7LXU6</accession>
<protein>
    <recommendedName>
        <fullName evidence="2">Purine nucleoside phosphorylase DeoD-type</fullName>
        <shortName evidence="2">PNP</shortName>
        <ecNumber evidence="2">2.4.2.1</ecNumber>
    </recommendedName>
</protein>
<comment type="function">
    <text evidence="2">Catalyzes the reversible phosphorolytic breakdown of the N-glycosidic bond in the beta-(deoxy)ribonucleoside molecules, with the formation of the corresponding free purine bases and pentose-1-phosphate.</text>
</comment>
<comment type="catalytic activity">
    <reaction evidence="2">
        <text>a purine D-ribonucleoside + phosphate = a purine nucleobase + alpha-D-ribose 1-phosphate</text>
        <dbReference type="Rhea" id="RHEA:19805"/>
        <dbReference type="ChEBI" id="CHEBI:26386"/>
        <dbReference type="ChEBI" id="CHEBI:43474"/>
        <dbReference type="ChEBI" id="CHEBI:57720"/>
        <dbReference type="ChEBI" id="CHEBI:142355"/>
        <dbReference type="EC" id="2.4.2.1"/>
    </reaction>
</comment>
<comment type="catalytic activity">
    <reaction evidence="2">
        <text>a purine 2'-deoxy-D-ribonucleoside + phosphate = a purine nucleobase + 2-deoxy-alpha-D-ribose 1-phosphate</text>
        <dbReference type="Rhea" id="RHEA:36431"/>
        <dbReference type="ChEBI" id="CHEBI:26386"/>
        <dbReference type="ChEBI" id="CHEBI:43474"/>
        <dbReference type="ChEBI" id="CHEBI:57259"/>
        <dbReference type="ChEBI" id="CHEBI:142361"/>
        <dbReference type="EC" id="2.4.2.1"/>
    </reaction>
</comment>
<comment type="subunit">
    <text evidence="2">Homohexamer; trimer of homodimers.</text>
</comment>
<comment type="similarity">
    <text evidence="2">Belongs to the PNP/UDP phosphorylase family.</text>
</comment>
<sequence>MATPHINAEMGDFADVVLMPGDPLRAKYIAETFLEDAREVNNVRGMLGFTGTYKGRKISVMGHGMGIPSCSIYTKELITDFGVKKIIRVGSCGAVLPHVKLRDVVIGMGACTDSKVNRIRFKDHDFAAIADFDMVRNAVDAAKALGIDARVGNLFSADLFYSPDGEMFDVMEKYGILGVEMEAAGIYGVAAEFGAKALTICTVSDHIRTHEQTTAAERQTTFNDMIKIALESVLLGDKE</sequence>
<keyword id="KW-0007">Acetylation</keyword>
<keyword id="KW-0328">Glycosyltransferase</keyword>
<keyword id="KW-0808">Transferase</keyword>
<dbReference type="EC" id="2.4.2.1" evidence="2"/>
<dbReference type="EMBL" id="CU928160">
    <property type="protein sequence ID" value="CAR01347.1"/>
    <property type="molecule type" value="Genomic_DNA"/>
</dbReference>
<dbReference type="RefSeq" id="WP_000224877.1">
    <property type="nucleotide sequence ID" value="NC_011741.1"/>
</dbReference>
<dbReference type="SMR" id="B7LXU6"/>
<dbReference type="GeneID" id="93777460"/>
<dbReference type="KEGG" id="ecr:ECIAI1_4607"/>
<dbReference type="HOGENOM" id="CLU_068457_2_0_6"/>
<dbReference type="GO" id="GO:0005829">
    <property type="term" value="C:cytosol"/>
    <property type="evidence" value="ECO:0007669"/>
    <property type="project" value="TreeGrafter"/>
</dbReference>
<dbReference type="GO" id="GO:0004731">
    <property type="term" value="F:purine-nucleoside phosphorylase activity"/>
    <property type="evidence" value="ECO:0007669"/>
    <property type="project" value="UniProtKB-UniRule"/>
</dbReference>
<dbReference type="GO" id="GO:0006152">
    <property type="term" value="P:purine nucleoside catabolic process"/>
    <property type="evidence" value="ECO:0007669"/>
    <property type="project" value="TreeGrafter"/>
</dbReference>
<dbReference type="CDD" id="cd09006">
    <property type="entry name" value="PNP_EcPNPI-like"/>
    <property type="match status" value="1"/>
</dbReference>
<dbReference type="FunFam" id="3.40.50.1580:FF:000002">
    <property type="entry name" value="Purine nucleoside phosphorylase DeoD-type"/>
    <property type="match status" value="1"/>
</dbReference>
<dbReference type="Gene3D" id="3.40.50.1580">
    <property type="entry name" value="Nucleoside phosphorylase domain"/>
    <property type="match status" value="1"/>
</dbReference>
<dbReference type="HAMAP" id="MF_01627">
    <property type="entry name" value="Pur_nucleosid_phosp"/>
    <property type="match status" value="1"/>
</dbReference>
<dbReference type="InterPro" id="IPR004402">
    <property type="entry name" value="DeoD-type"/>
</dbReference>
<dbReference type="InterPro" id="IPR018016">
    <property type="entry name" value="Nucleoside_phosphorylase_CS"/>
</dbReference>
<dbReference type="InterPro" id="IPR000845">
    <property type="entry name" value="Nucleoside_phosphorylase_d"/>
</dbReference>
<dbReference type="InterPro" id="IPR035994">
    <property type="entry name" value="Nucleoside_phosphorylase_sf"/>
</dbReference>
<dbReference type="NCBIfam" id="TIGR00107">
    <property type="entry name" value="deoD"/>
    <property type="match status" value="1"/>
</dbReference>
<dbReference type="NCBIfam" id="NF004489">
    <property type="entry name" value="PRK05819.1"/>
    <property type="match status" value="1"/>
</dbReference>
<dbReference type="NCBIfam" id="NF009914">
    <property type="entry name" value="PRK13374.1"/>
    <property type="match status" value="1"/>
</dbReference>
<dbReference type="PANTHER" id="PTHR43691:SF2">
    <property type="entry name" value="PURINE NUCLEOSIDE PHOSPHORYLASE DEOD-TYPE"/>
    <property type="match status" value="1"/>
</dbReference>
<dbReference type="PANTHER" id="PTHR43691">
    <property type="entry name" value="URIDINE PHOSPHORYLASE"/>
    <property type="match status" value="1"/>
</dbReference>
<dbReference type="Pfam" id="PF01048">
    <property type="entry name" value="PNP_UDP_1"/>
    <property type="match status" value="1"/>
</dbReference>
<dbReference type="SUPFAM" id="SSF53167">
    <property type="entry name" value="Purine and uridine phosphorylases"/>
    <property type="match status" value="1"/>
</dbReference>
<dbReference type="PROSITE" id="PS01232">
    <property type="entry name" value="PNP_UDP_1"/>
    <property type="match status" value="1"/>
</dbReference>
<organism>
    <name type="scientific">Escherichia coli O8 (strain IAI1)</name>
    <dbReference type="NCBI Taxonomy" id="585034"/>
    <lineage>
        <taxon>Bacteria</taxon>
        <taxon>Pseudomonadati</taxon>
        <taxon>Pseudomonadota</taxon>
        <taxon>Gammaproteobacteria</taxon>
        <taxon>Enterobacterales</taxon>
        <taxon>Enterobacteriaceae</taxon>
        <taxon>Escherichia</taxon>
    </lineage>
</organism>
<feature type="chain" id="PRO_1000186190" description="Purine nucleoside phosphorylase DeoD-type">
    <location>
        <begin position="1"/>
        <end position="239"/>
    </location>
</feature>
<feature type="active site" description="Proton donor" evidence="2">
    <location>
        <position position="205"/>
    </location>
</feature>
<feature type="binding site" evidence="1">
    <location>
        <position position="5"/>
    </location>
    <ligand>
        <name>a purine D-ribonucleoside</name>
        <dbReference type="ChEBI" id="CHEBI:142355"/>
        <note>ligand shared between dimeric partners</note>
    </ligand>
</feature>
<feature type="binding site" description="in other chain" evidence="1">
    <location>
        <position position="21"/>
    </location>
    <ligand>
        <name>phosphate</name>
        <dbReference type="ChEBI" id="CHEBI:43474"/>
        <note>ligand shared between dimeric partners</note>
    </ligand>
</feature>
<feature type="binding site" description="in other chain" evidence="1">
    <location>
        <position position="25"/>
    </location>
    <ligand>
        <name>phosphate</name>
        <dbReference type="ChEBI" id="CHEBI:43474"/>
        <note>ligand shared between dimeric partners</note>
    </ligand>
</feature>
<feature type="binding site" evidence="1">
    <location>
        <position position="44"/>
    </location>
    <ligand>
        <name>phosphate</name>
        <dbReference type="ChEBI" id="CHEBI:43474"/>
        <note>ligand shared between dimeric partners</note>
    </ligand>
</feature>
<feature type="binding site" description="in other chain" evidence="1">
    <location>
        <begin position="88"/>
        <end position="91"/>
    </location>
    <ligand>
        <name>phosphate</name>
        <dbReference type="ChEBI" id="CHEBI:43474"/>
        <note>ligand shared between dimeric partners</note>
    </ligand>
</feature>
<feature type="binding site" description="in other chain" evidence="1">
    <location>
        <begin position="180"/>
        <end position="182"/>
    </location>
    <ligand>
        <name>a purine D-ribonucleoside</name>
        <dbReference type="ChEBI" id="CHEBI:142355"/>
        <note>ligand shared between dimeric partners</note>
    </ligand>
</feature>
<feature type="binding site" description="in other chain" evidence="1">
    <location>
        <begin position="204"/>
        <end position="205"/>
    </location>
    <ligand>
        <name>a purine D-ribonucleoside</name>
        <dbReference type="ChEBI" id="CHEBI:142355"/>
        <note>ligand shared between dimeric partners</note>
    </ligand>
</feature>
<feature type="site" description="Important for catalytic activity" evidence="2">
    <location>
        <position position="218"/>
    </location>
</feature>
<feature type="modified residue" description="N6-acetyllysine" evidence="2">
    <location>
        <position position="27"/>
    </location>
</feature>